<reference key="1">
    <citation type="submission" date="2008-10" db="EMBL/GenBank/DDBJ databases">
        <title>Genome sequence of Clostridium botulinum A2 Kyoto.</title>
        <authorList>
            <person name="Shrivastava S."/>
            <person name="Brinkac L.M."/>
            <person name="Brown J.L."/>
            <person name="Bruce D."/>
            <person name="Detter C.C."/>
            <person name="Johnson E.A."/>
            <person name="Munk C.A."/>
            <person name="Smith L.A."/>
            <person name="Smith T.J."/>
            <person name="Sutton G."/>
            <person name="Brettin T.S."/>
        </authorList>
    </citation>
    <scope>NUCLEOTIDE SEQUENCE [LARGE SCALE GENOMIC DNA]</scope>
    <source>
        <strain>Kyoto / Type A2</strain>
    </source>
</reference>
<keyword id="KW-0687">Ribonucleoprotein</keyword>
<keyword id="KW-0689">Ribosomal protein</keyword>
<comment type="similarity">
    <text evidence="1">Belongs to the universal ribosomal protein uS2 family.</text>
</comment>
<proteinExistence type="inferred from homology"/>
<feature type="chain" id="PRO_1000194330" description="Small ribosomal subunit protein uS2">
    <location>
        <begin position="1"/>
        <end position="233"/>
    </location>
</feature>
<gene>
    <name evidence="1" type="primary">rpsB</name>
    <name type="ordered locus">CLM_2728</name>
</gene>
<protein>
    <recommendedName>
        <fullName evidence="1">Small ribosomal subunit protein uS2</fullName>
    </recommendedName>
    <alternativeName>
        <fullName evidence="2">30S ribosomal protein S2</fullName>
    </alternativeName>
</protein>
<accession>C1FSK5</accession>
<evidence type="ECO:0000255" key="1">
    <source>
        <dbReference type="HAMAP-Rule" id="MF_00291"/>
    </source>
</evidence>
<evidence type="ECO:0000305" key="2"/>
<organism>
    <name type="scientific">Clostridium botulinum (strain Kyoto / Type A2)</name>
    <dbReference type="NCBI Taxonomy" id="536232"/>
    <lineage>
        <taxon>Bacteria</taxon>
        <taxon>Bacillati</taxon>
        <taxon>Bacillota</taxon>
        <taxon>Clostridia</taxon>
        <taxon>Eubacteriales</taxon>
        <taxon>Clostridiaceae</taxon>
        <taxon>Clostridium</taxon>
    </lineage>
</organism>
<dbReference type="EMBL" id="CP001581">
    <property type="protein sequence ID" value="ACO85090.1"/>
    <property type="molecule type" value="Genomic_DNA"/>
</dbReference>
<dbReference type="RefSeq" id="WP_003362578.1">
    <property type="nucleotide sequence ID" value="NC_012563.1"/>
</dbReference>
<dbReference type="SMR" id="C1FSK5"/>
<dbReference type="GeneID" id="5186690"/>
<dbReference type="KEGG" id="cby:CLM_2728"/>
<dbReference type="eggNOG" id="COG0052">
    <property type="taxonomic scope" value="Bacteria"/>
</dbReference>
<dbReference type="HOGENOM" id="CLU_040318_1_2_9"/>
<dbReference type="Proteomes" id="UP000001374">
    <property type="component" value="Chromosome"/>
</dbReference>
<dbReference type="GO" id="GO:0022627">
    <property type="term" value="C:cytosolic small ribosomal subunit"/>
    <property type="evidence" value="ECO:0007669"/>
    <property type="project" value="TreeGrafter"/>
</dbReference>
<dbReference type="GO" id="GO:0003735">
    <property type="term" value="F:structural constituent of ribosome"/>
    <property type="evidence" value="ECO:0007669"/>
    <property type="project" value="InterPro"/>
</dbReference>
<dbReference type="GO" id="GO:0006412">
    <property type="term" value="P:translation"/>
    <property type="evidence" value="ECO:0007669"/>
    <property type="project" value="UniProtKB-UniRule"/>
</dbReference>
<dbReference type="CDD" id="cd01425">
    <property type="entry name" value="RPS2"/>
    <property type="match status" value="1"/>
</dbReference>
<dbReference type="FunFam" id="1.10.287.610:FF:000001">
    <property type="entry name" value="30S ribosomal protein S2"/>
    <property type="match status" value="1"/>
</dbReference>
<dbReference type="Gene3D" id="3.40.50.10490">
    <property type="entry name" value="Glucose-6-phosphate isomerase like protein, domain 1"/>
    <property type="match status" value="1"/>
</dbReference>
<dbReference type="Gene3D" id="1.10.287.610">
    <property type="entry name" value="Helix hairpin bin"/>
    <property type="match status" value="1"/>
</dbReference>
<dbReference type="HAMAP" id="MF_00291_B">
    <property type="entry name" value="Ribosomal_uS2_B"/>
    <property type="match status" value="1"/>
</dbReference>
<dbReference type="InterPro" id="IPR001865">
    <property type="entry name" value="Ribosomal_uS2"/>
</dbReference>
<dbReference type="InterPro" id="IPR005706">
    <property type="entry name" value="Ribosomal_uS2_bac/mit/plastid"/>
</dbReference>
<dbReference type="InterPro" id="IPR018130">
    <property type="entry name" value="Ribosomal_uS2_CS"/>
</dbReference>
<dbReference type="InterPro" id="IPR023591">
    <property type="entry name" value="Ribosomal_uS2_flav_dom_sf"/>
</dbReference>
<dbReference type="NCBIfam" id="TIGR01011">
    <property type="entry name" value="rpsB_bact"/>
    <property type="match status" value="1"/>
</dbReference>
<dbReference type="PANTHER" id="PTHR12534">
    <property type="entry name" value="30S RIBOSOMAL PROTEIN S2 PROKARYOTIC AND ORGANELLAR"/>
    <property type="match status" value="1"/>
</dbReference>
<dbReference type="PANTHER" id="PTHR12534:SF0">
    <property type="entry name" value="SMALL RIBOSOMAL SUBUNIT PROTEIN US2M"/>
    <property type="match status" value="1"/>
</dbReference>
<dbReference type="Pfam" id="PF00318">
    <property type="entry name" value="Ribosomal_S2"/>
    <property type="match status" value="1"/>
</dbReference>
<dbReference type="PRINTS" id="PR00395">
    <property type="entry name" value="RIBOSOMALS2"/>
</dbReference>
<dbReference type="SUPFAM" id="SSF52313">
    <property type="entry name" value="Ribosomal protein S2"/>
    <property type="match status" value="1"/>
</dbReference>
<dbReference type="PROSITE" id="PS00962">
    <property type="entry name" value="RIBOSOMAL_S2_1"/>
    <property type="match status" value="1"/>
</dbReference>
<sequence length="233" mass="26396">MSVISMKQLLEAGVHFGHQTRRWNPKMAPYIFTERNGIYIIDLQKTVKKVEEAYNFLRSVAEEGKDVLFVGTKKQAQEAIEEEAKRSEMHFVNNRWLGGMLTNFTTITARINKLEELDKMEEDGTFEVLPKKEVIKLKNEREKLEKNLGGIRKLDANNVGAMFIVDPRKEKNAILEAKRLGIPVVAIVDTNCDPDEVDFVIPGNDDAIRAVRLIAAKMADAVLEGRQGEQLAE</sequence>
<name>RS2_CLOBJ</name>